<reference key="1">
    <citation type="journal article" date="1998" name="J. Cell Biol.">
        <title>imp2, a new component of the actin ring in the fission yeast Schizosaccharomyces pombe.</title>
        <authorList>
            <person name="Demeter J."/>
            <person name="Sazer S."/>
        </authorList>
    </citation>
    <scope>NUCLEOTIDE SEQUENCE [GENOMIC DNA]</scope>
    <scope>FUNCTION</scope>
    <scope>SUBCELLULAR LOCATION</scope>
</reference>
<reference key="2">
    <citation type="journal article" date="2002" name="Nature">
        <title>The genome sequence of Schizosaccharomyces pombe.</title>
        <authorList>
            <person name="Wood V."/>
            <person name="Gwilliam R."/>
            <person name="Rajandream M.A."/>
            <person name="Lyne M.H."/>
            <person name="Lyne R."/>
            <person name="Stewart A."/>
            <person name="Sgouros J.G."/>
            <person name="Peat N."/>
            <person name="Hayles J."/>
            <person name="Baker S.G."/>
            <person name="Basham D."/>
            <person name="Bowman S."/>
            <person name="Brooks K."/>
            <person name="Brown D."/>
            <person name="Brown S."/>
            <person name="Chillingworth T."/>
            <person name="Churcher C.M."/>
            <person name="Collins M."/>
            <person name="Connor R."/>
            <person name="Cronin A."/>
            <person name="Davis P."/>
            <person name="Feltwell T."/>
            <person name="Fraser A."/>
            <person name="Gentles S."/>
            <person name="Goble A."/>
            <person name="Hamlin N."/>
            <person name="Harris D.E."/>
            <person name="Hidalgo J."/>
            <person name="Hodgson G."/>
            <person name="Holroyd S."/>
            <person name="Hornsby T."/>
            <person name="Howarth S."/>
            <person name="Huckle E.J."/>
            <person name="Hunt S."/>
            <person name="Jagels K."/>
            <person name="James K.D."/>
            <person name="Jones L."/>
            <person name="Jones M."/>
            <person name="Leather S."/>
            <person name="McDonald S."/>
            <person name="McLean J."/>
            <person name="Mooney P."/>
            <person name="Moule S."/>
            <person name="Mungall K.L."/>
            <person name="Murphy L.D."/>
            <person name="Niblett D."/>
            <person name="Odell C."/>
            <person name="Oliver K."/>
            <person name="O'Neil S."/>
            <person name="Pearson D."/>
            <person name="Quail M.A."/>
            <person name="Rabbinowitsch E."/>
            <person name="Rutherford K.M."/>
            <person name="Rutter S."/>
            <person name="Saunders D."/>
            <person name="Seeger K."/>
            <person name="Sharp S."/>
            <person name="Skelton J."/>
            <person name="Simmonds M.N."/>
            <person name="Squares R."/>
            <person name="Squares S."/>
            <person name="Stevens K."/>
            <person name="Taylor K."/>
            <person name="Taylor R.G."/>
            <person name="Tivey A."/>
            <person name="Walsh S.V."/>
            <person name="Warren T."/>
            <person name="Whitehead S."/>
            <person name="Woodward J.R."/>
            <person name="Volckaert G."/>
            <person name="Aert R."/>
            <person name="Robben J."/>
            <person name="Grymonprez B."/>
            <person name="Weltjens I."/>
            <person name="Vanstreels E."/>
            <person name="Rieger M."/>
            <person name="Schaefer M."/>
            <person name="Mueller-Auer S."/>
            <person name="Gabel C."/>
            <person name="Fuchs M."/>
            <person name="Duesterhoeft A."/>
            <person name="Fritzc C."/>
            <person name="Holzer E."/>
            <person name="Moestl D."/>
            <person name="Hilbert H."/>
            <person name="Borzym K."/>
            <person name="Langer I."/>
            <person name="Beck A."/>
            <person name="Lehrach H."/>
            <person name="Reinhardt R."/>
            <person name="Pohl T.M."/>
            <person name="Eger P."/>
            <person name="Zimmermann W."/>
            <person name="Wedler H."/>
            <person name="Wambutt R."/>
            <person name="Purnelle B."/>
            <person name="Goffeau A."/>
            <person name="Cadieu E."/>
            <person name="Dreano S."/>
            <person name="Gloux S."/>
            <person name="Lelaure V."/>
            <person name="Mottier S."/>
            <person name="Galibert F."/>
            <person name="Aves S.J."/>
            <person name="Xiang Z."/>
            <person name="Hunt C."/>
            <person name="Moore K."/>
            <person name="Hurst S.M."/>
            <person name="Lucas M."/>
            <person name="Rochet M."/>
            <person name="Gaillardin C."/>
            <person name="Tallada V.A."/>
            <person name="Garzon A."/>
            <person name="Thode G."/>
            <person name="Daga R.R."/>
            <person name="Cruzado L."/>
            <person name="Jimenez J."/>
            <person name="Sanchez M."/>
            <person name="del Rey F."/>
            <person name="Benito J."/>
            <person name="Dominguez A."/>
            <person name="Revuelta J.L."/>
            <person name="Moreno S."/>
            <person name="Armstrong J."/>
            <person name="Forsburg S.L."/>
            <person name="Cerutti L."/>
            <person name="Lowe T."/>
            <person name="McCombie W.R."/>
            <person name="Paulsen I."/>
            <person name="Potashkin J."/>
            <person name="Shpakovski G.V."/>
            <person name="Ussery D."/>
            <person name="Barrell B.G."/>
            <person name="Nurse P."/>
        </authorList>
    </citation>
    <scope>NUCLEOTIDE SEQUENCE [LARGE SCALE GENOMIC DNA]</scope>
    <source>
        <strain>972 / ATCC 24843</strain>
    </source>
</reference>
<reference key="3">
    <citation type="journal article" date="2008" name="J. Proteome Res.">
        <title>Phosphoproteome analysis of fission yeast.</title>
        <authorList>
            <person name="Wilson-Grady J.T."/>
            <person name="Villen J."/>
            <person name="Gygi S.P."/>
        </authorList>
    </citation>
    <scope>PHOSPHORYLATION [LARGE SCALE ANALYSIS] AT SER-397; SER-503 AND THR-531</scope>
    <scope>IDENTIFICATION BY MASS SPECTROMETRY</scope>
</reference>
<comment type="function">
    <text evidence="5">Required for normal septation. Involved in the disassembly of the medial ring during septation.</text>
</comment>
<comment type="subcellular location">
    <subcellularLocation>
        <location evidence="5">Cytoplasm</location>
        <location evidence="5">Cytoskeleton</location>
    </subcellularLocation>
    <text>Associates with the medial ring during septation.</text>
</comment>
<dbReference type="EMBL" id="CU329671">
    <property type="protein sequence ID" value="CAA20684.1"/>
    <property type="molecule type" value="Genomic_DNA"/>
</dbReference>
<dbReference type="PIR" id="T39317">
    <property type="entry name" value="S67383"/>
</dbReference>
<dbReference type="RefSeq" id="NP_596391.1">
    <property type="nucleotide sequence ID" value="NM_001022312.2"/>
</dbReference>
<dbReference type="PDB" id="5C1F">
    <property type="method" value="X-ray"/>
    <property type="resolution" value="2.36 A"/>
    <property type="chains" value="A/B=15-320"/>
</dbReference>
<dbReference type="PDBsum" id="5C1F"/>
<dbReference type="SMR" id="Q10199"/>
<dbReference type="BioGRID" id="276649">
    <property type="interactions" value="32"/>
</dbReference>
<dbReference type="FunCoup" id="Q10199">
    <property type="interactions" value="34"/>
</dbReference>
<dbReference type="STRING" id="284812.Q10199"/>
<dbReference type="iPTMnet" id="Q10199"/>
<dbReference type="PaxDb" id="4896-SPBC11C11.02.1"/>
<dbReference type="EnsemblFungi" id="SPBC11C11.02.1">
    <property type="protein sequence ID" value="SPBC11C11.02.1:pep"/>
    <property type="gene ID" value="SPBC11C11.02"/>
</dbReference>
<dbReference type="GeneID" id="2540112"/>
<dbReference type="KEGG" id="spo:2540112"/>
<dbReference type="PomBase" id="SPBC11C11.02">
    <property type="gene designation" value="imp2"/>
</dbReference>
<dbReference type="VEuPathDB" id="FungiDB:SPBC11C11.02"/>
<dbReference type="eggNOG" id="KOG2398">
    <property type="taxonomic scope" value="Eukaryota"/>
</dbReference>
<dbReference type="HOGENOM" id="CLU_003525_1_1_1"/>
<dbReference type="InParanoid" id="Q10199"/>
<dbReference type="OMA" id="RFAKSWN"/>
<dbReference type="PhylomeDB" id="Q10199"/>
<dbReference type="Reactome" id="R-SPO-8856828">
    <property type="pathway name" value="Clathrin-mediated endocytosis"/>
</dbReference>
<dbReference type="EvolutionaryTrace" id="Q10199"/>
<dbReference type="PRO" id="PR:Q10199"/>
<dbReference type="Proteomes" id="UP000002485">
    <property type="component" value="Chromosome II"/>
</dbReference>
<dbReference type="GO" id="GO:0005826">
    <property type="term" value="C:actomyosin contractile ring"/>
    <property type="evidence" value="ECO:0000269"/>
    <property type="project" value="PomBase"/>
</dbReference>
<dbReference type="GO" id="GO:0032153">
    <property type="term" value="C:cell division site"/>
    <property type="evidence" value="ECO:0000318"/>
    <property type="project" value="GO_Central"/>
</dbReference>
<dbReference type="GO" id="GO:0005737">
    <property type="term" value="C:cytoplasm"/>
    <property type="evidence" value="ECO:0000314"/>
    <property type="project" value="PomBase"/>
</dbReference>
<dbReference type="GO" id="GO:0009898">
    <property type="term" value="C:cytoplasmic side of plasma membrane"/>
    <property type="evidence" value="ECO:0000314"/>
    <property type="project" value="PomBase"/>
</dbReference>
<dbReference type="GO" id="GO:0005829">
    <property type="term" value="C:cytosol"/>
    <property type="evidence" value="ECO:0007005"/>
    <property type="project" value="PomBase"/>
</dbReference>
<dbReference type="GO" id="GO:0110085">
    <property type="term" value="C:mitotic actomyosin contractile ring"/>
    <property type="evidence" value="ECO:0000314"/>
    <property type="project" value="PomBase"/>
</dbReference>
<dbReference type="GO" id="GO:0120104">
    <property type="term" value="C:mitotic actomyosin contractile ring, proximal layer"/>
    <property type="evidence" value="ECO:0000314"/>
    <property type="project" value="PomBase"/>
</dbReference>
<dbReference type="GO" id="GO:0106006">
    <property type="term" value="F:cytoskeletal protein-membrane anchor activity"/>
    <property type="evidence" value="ECO:0000353"/>
    <property type="project" value="PomBase"/>
</dbReference>
<dbReference type="GO" id="GO:0005547">
    <property type="term" value="F:phosphatidylinositol-3,4,5-trisphosphate binding"/>
    <property type="evidence" value="ECO:0000314"/>
    <property type="project" value="PomBase"/>
</dbReference>
<dbReference type="GO" id="GO:0070273">
    <property type="term" value="F:phosphatidylinositol-4-phosphate binding"/>
    <property type="evidence" value="ECO:0000314"/>
    <property type="project" value="PomBase"/>
</dbReference>
<dbReference type="GO" id="GO:0001786">
    <property type="term" value="F:phosphatidylserine binding"/>
    <property type="evidence" value="ECO:0000314"/>
    <property type="project" value="PomBase"/>
</dbReference>
<dbReference type="GO" id="GO:0005543">
    <property type="term" value="F:phospholipid binding"/>
    <property type="evidence" value="ECO:0000269"/>
    <property type="project" value="PomBase"/>
</dbReference>
<dbReference type="GO" id="GO:0007010">
    <property type="term" value="P:cytoskeleton organization"/>
    <property type="evidence" value="ECO:0000318"/>
    <property type="project" value="GO_Central"/>
</dbReference>
<dbReference type="GO" id="GO:1903475">
    <property type="term" value="P:mitotic actomyosin contractile ring assembly"/>
    <property type="evidence" value="ECO:0000315"/>
    <property type="project" value="PomBase"/>
</dbReference>
<dbReference type="GO" id="GO:1902404">
    <property type="term" value="P:mitotic actomyosin contractile ring contraction"/>
    <property type="evidence" value="ECO:0000315"/>
    <property type="project" value="PomBase"/>
</dbReference>
<dbReference type="CDD" id="cd07651">
    <property type="entry name" value="F-BAR_PombeCdc15_like"/>
    <property type="match status" value="1"/>
</dbReference>
<dbReference type="CDD" id="cd00174">
    <property type="entry name" value="SH3"/>
    <property type="match status" value="1"/>
</dbReference>
<dbReference type="FunFam" id="1.20.1270.60:FF:000045">
    <property type="entry name" value="Cell division control protein"/>
    <property type="match status" value="1"/>
</dbReference>
<dbReference type="FunFam" id="2.30.30.40:FF:000164">
    <property type="entry name" value="Cell division control protein"/>
    <property type="match status" value="1"/>
</dbReference>
<dbReference type="Gene3D" id="1.20.1270.60">
    <property type="entry name" value="Arfaptin homology (AH) domain/BAR domain"/>
    <property type="match status" value="1"/>
</dbReference>
<dbReference type="Gene3D" id="2.30.30.40">
    <property type="entry name" value="SH3 Domains"/>
    <property type="match status" value="1"/>
</dbReference>
<dbReference type="InterPro" id="IPR027267">
    <property type="entry name" value="AH/BAR_dom_sf"/>
</dbReference>
<dbReference type="InterPro" id="IPR031160">
    <property type="entry name" value="F_BAR"/>
</dbReference>
<dbReference type="InterPro" id="IPR001060">
    <property type="entry name" value="FCH_dom"/>
</dbReference>
<dbReference type="InterPro" id="IPR036028">
    <property type="entry name" value="SH3-like_dom_sf"/>
</dbReference>
<dbReference type="InterPro" id="IPR001452">
    <property type="entry name" value="SH3_domain"/>
</dbReference>
<dbReference type="PANTHER" id="PTHR23065:SF7">
    <property type="entry name" value="NOSTRIN, ISOFORM H"/>
    <property type="match status" value="1"/>
</dbReference>
<dbReference type="PANTHER" id="PTHR23065">
    <property type="entry name" value="PROLINE-SERINE-THREONINE PHOSPHATASE INTERACTING PROTEIN 1"/>
    <property type="match status" value="1"/>
</dbReference>
<dbReference type="Pfam" id="PF00611">
    <property type="entry name" value="FCH"/>
    <property type="match status" value="1"/>
</dbReference>
<dbReference type="Pfam" id="PF00018">
    <property type="entry name" value="SH3_1"/>
    <property type="match status" value="1"/>
</dbReference>
<dbReference type="PRINTS" id="PR00452">
    <property type="entry name" value="SH3DOMAIN"/>
</dbReference>
<dbReference type="SMART" id="SM00055">
    <property type="entry name" value="FCH"/>
    <property type="match status" value="1"/>
</dbReference>
<dbReference type="SMART" id="SM00326">
    <property type="entry name" value="SH3"/>
    <property type="match status" value="1"/>
</dbReference>
<dbReference type="SUPFAM" id="SSF103657">
    <property type="entry name" value="BAR/IMD domain-like"/>
    <property type="match status" value="1"/>
</dbReference>
<dbReference type="SUPFAM" id="SSF50044">
    <property type="entry name" value="SH3-domain"/>
    <property type="match status" value="1"/>
</dbReference>
<dbReference type="PROSITE" id="PS51741">
    <property type="entry name" value="F_BAR"/>
    <property type="match status" value="1"/>
</dbReference>
<dbReference type="PROSITE" id="PS50002">
    <property type="entry name" value="SH3"/>
    <property type="match status" value="1"/>
</dbReference>
<protein>
    <recommendedName>
        <fullName>Septation protein imp2</fullName>
    </recommendedName>
</protein>
<name>IMP2_SCHPO</name>
<keyword id="KW-0002">3D-structure</keyword>
<keyword id="KW-0131">Cell cycle</keyword>
<keyword id="KW-0132">Cell division</keyword>
<keyword id="KW-0175">Coiled coil</keyword>
<keyword id="KW-0963">Cytoplasm</keyword>
<keyword id="KW-0206">Cytoskeleton</keyword>
<keyword id="KW-0498">Mitosis</keyword>
<keyword id="KW-0597">Phosphoprotein</keyword>
<keyword id="KW-1185">Reference proteome</keyword>
<keyword id="KW-0728">SH3 domain</keyword>
<evidence type="ECO:0000255" key="1">
    <source>
        <dbReference type="PROSITE-ProRule" id="PRU00192"/>
    </source>
</evidence>
<evidence type="ECO:0000255" key="2">
    <source>
        <dbReference type="PROSITE-ProRule" id="PRU01077"/>
    </source>
</evidence>
<evidence type="ECO:0000256" key="3">
    <source>
        <dbReference type="SAM" id="MobiDB-lite"/>
    </source>
</evidence>
<evidence type="ECO:0000269" key="4">
    <source>
    </source>
</evidence>
<evidence type="ECO:0000269" key="5">
    <source>
    </source>
</evidence>
<evidence type="ECO:0007829" key="6">
    <source>
        <dbReference type="PDB" id="5C1F"/>
    </source>
</evidence>
<gene>
    <name type="primary">imp2</name>
    <name type="ORF">SPBC11C11.02</name>
</gene>
<feature type="chain" id="PRO_0000084186" description="Septation protein imp2">
    <location>
        <begin position="1"/>
        <end position="670"/>
    </location>
</feature>
<feature type="domain" description="F-BAR" evidence="2">
    <location>
        <begin position="16"/>
        <end position="269"/>
    </location>
</feature>
<feature type="domain" description="SH3" evidence="1">
    <location>
        <begin position="607"/>
        <end position="670"/>
    </location>
</feature>
<feature type="region of interest" description="Disordered" evidence="3">
    <location>
        <begin position="353"/>
        <end position="472"/>
    </location>
</feature>
<feature type="region of interest" description="Disordered" evidence="3">
    <location>
        <begin position="489"/>
        <end position="602"/>
    </location>
</feature>
<feature type="compositionally biased region" description="Low complexity" evidence="3">
    <location>
        <begin position="357"/>
        <end position="377"/>
    </location>
</feature>
<feature type="compositionally biased region" description="Polar residues" evidence="3">
    <location>
        <begin position="380"/>
        <end position="389"/>
    </location>
</feature>
<feature type="compositionally biased region" description="Basic and acidic residues" evidence="3">
    <location>
        <begin position="410"/>
        <end position="422"/>
    </location>
</feature>
<feature type="compositionally biased region" description="Polar residues" evidence="3">
    <location>
        <begin position="450"/>
        <end position="472"/>
    </location>
</feature>
<feature type="compositionally biased region" description="Polar residues" evidence="3">
    <location>
        <begin position="570"/>
        <end position="583"/>
    </location>
</feature>
<feature type="modified residue" description="Phosphoserine" evidence="4">
    <location>
        <position position="397"/>
    </location>
</feature>
<feature type="modified residue" description="Phosphoserine" evidence="4">
    <location>
        <position position="503"/>
    </location>
</feature>
<feature type="modified residue" description="Phosphothreonine" evidence="4">
    <location>
        <position position="531"/>
    </location>
</feature>
<feature type="helix" evidence="6">
    <location>
        <begin position="18"/>
        <end position="21"/>
    </location>
</feature>
<feature type="helix" evidence="6">
    <location>
        <begin position="28"/>
        <end position="69"/>
    </location>
</feature>
<feature type="helix" evidence="6">
    <location>
        <begin position="79"/>
        <end position="108"/>
    </location>
</feature>
<feature type="helix" evidence="6">
    <location>
        <begin position="111"/>
        <end position="165"/>
    </location>
</feature>
<feature type="helix" evidence="6">
    <location>
        <begin position="166"/>
        <end position="168"/>
    </location>
</feature>
<feature type="helix" evidence="6">
    <location>
        <begin position="172"/>
        <end position="262"/>
    </location>
</feature>
<feature type="helix" evidence="6">
    <location>
        <begin position="266"/>
        <end position="277"/>
    </location>
</feature>
<feature type="strand" evidence="6">
    <location>
        <begin position="280"/>
        <end position="284"/>
    </location>
</feature>
<feature type="helix" evidence="6">
    <location>
        <begin position="292"/>
        <end position="294"/>
    </location>
</feature>
<feature type="strand" evidence="6">
    <location>
        <begin position="304"/>
        <end position="306"/>
    </location>
</feature>
<accession>Q10199</accession>
<proteinExistence type="evidence at protein level"/>
<sequence>MSQQLSFNASSAKPDKSFSNYFWGANDEGYHALLSRFSDVKHINEELRSFYHERANIEEDYAKRMAKLSRTTFSSLETGCLKESVQVMKAEVDNMAKSHLQISQLLQDDVENAFTRYAASLKDKKKMIVSGIEKVHKDKLSKHQALVKAQDKYHYLCKKVNYYVSQQNMLFGKELEKNNAKLNKTQNAITASSSDYQSAVAAVRDSYARWTNEWRSTCDKLQDIEEERRHFLKSVMWTFTLLISRSCFNDDQACERIRKNLEQCSVSQDVLEFIDAKSTGTGIPQPPKFYDYYKGEVPDDSVELVQANFQRAQTKIENDNMPLNRPYVLSATARNESSFENTLPNTPSAIQSLTTVSSNSSQNGRSSPKKSFLSKFKLTSRPSTPNVGNTAPDALSSPRNDSPLTSAADEQMKHLSLQEEPKQNPTPAAPGAFPNSNTLPPRYNELGSLPSPNSVSFTEDSRPNVNTPSRRQQIQEEFGSVLQMENRAVSPVYDSRKNGSRSSFTLRKSRSPKRPSSSLSQNASRLPRSLTPGNLEPNYDFGVRVDPASGTAPTDDEPYTDRDSSFVDDTINTKATGNTSNRLSLPAYPTDGGDTSIDNPTSTDGQRILGYVSALYDYDAAIPEEISFRKGDTIAVLKLYEDGWWEGFVVGEDDHNRGQFPSNFVREIEV</sequence>
<organism>
    <name type="scientific">Schizosaccharomyces pombe (strain 972 / ATCC 24843)</name>
    <name type="common">Fission yeast</name>
    <dbReference type="NCBI Taxonomy" id="284812"/>
    <lineage>
        <taxon>Eukaryota</taxon>
        <taxon>Fungi</taxon>
        <taxon>Dikarya</taxon>
        <taxon>Ascomycota</taxon>
        <taxon>Taphrinomycotina</taxon>
        <taxon>Schizosaccharomycetes</taxon>
        <taxon>Schizosaccharomycetales</taxon>
        <taxon>Schizosaccharomycetaceae</taxon>
        <taxon>Schizosaccharomyces</taxon>
    </lineage>
</organism>